<sequence>MKEIIVALVGQPNVGKSSLINALSNAHLKVGNFAGVTVDKMEVSLIHKDHQITIIDLPGTYALNDFTTEEKVTKDFLEKGQYDLILNVVDSTNLERNLALSAQLLDTNKKMLLALNMWDEAKKEGININTEKLSQELGVVCVPTSARSKEDRLNTELLLDEIVRLYSQNTTNNENIKVPSQSFKESLKYSQSAQRIAKSVISENKQNASFEHTYKIDKILMHQRYGIFIFLGFMFIIFSLSFLIGGGVQKALEEGFKILSDSIKENVANEDLASLVGDGIIGGVGATVSFLPLIVVLYFGISLLETTGYMSRVAFLLDGILHKFGLHGKSFIPLITGFGCSVPAYMATRTLQNYNERLITLFVIGFMSCSARLPIYVLFVGSFFPSSSAGFVLFCIYILGAVVALVMAKLLKLSVFKGQTESFIMEMPKYRFPSWRMVYFSIYTKSLSYLKKAGTYILVGAILIWFMSQYPKNDAAMKTYKQESLLVQKNANLSSEAKEEKLKELKTELDKKNLKNSVVGRGGAYLEKVFNPMDFDWRLSVSLVTGFMAKEVVVSTLGVLFSLGDQNEKSDAFREIIRKEVSVPSGIAFIVFVMFYIPCFAATITFGREAGGIKFVAYLFIFTTVVAYAFSLIAFYATQILV</sequence>
<gene>
    <name type="primary">feoB</name>
    <name type="ordered locus">jhp_0627</name>
</gene>
<reference key="1">
    <citation type="journal article" date="1999" name="Nature">
        <title>Genomic sequence comparison of two unrelated isolates of the human gastric pathogen Helicobacter pylori.</title>
        <authorList>
            <person name="Alm R.A."/>
            <person name="Ling L.-S.L."/>
            <person name="Moir D.T."/>
            <person name="King B.L."/>
            <person name="Brown E.D."/>
            <person name="Doig P.C."/>
            <person name="Smith D.R."/>
            <person name="Noonan B."/>
            <person name="Guild B.C."/>
            <person name="deJonge B.L."/>
            <person name="Carmel G."/>
            <person name="Tummino P.J."/>
            <person name="Caruso A."/>
            <person name="Uria-Nickelsen M."/>
            <person name="Mills D.M."/>
            <person name="Ives C."/>
            <person name="Gibson R."/>
            <person name="Merberg D."/>
            <person name="Mills S.D."/>
            <person name="Jiang Q."/>
            <person name="Taylor D.E."/>
            <person name="Vovis G.F."/>
            <person name="Trust T.J."/>
        </authorList>
    </citation>
    <scope>NUCLEOTIDE SEQUENCE [LARGE SCALE GENOMIC DNA]</scope>
    <source>
        <strain>J99 / ATCC 700824</strain>
    </source>
</reference>
<organism>
    <name type="scientific">Helicobacter pylori (strain J99 / ATCC 700824)</name>
    <name type="common">Campylobacter pylori J99</name>
    <dbReference type="NCBI Taxonomy" id="85963"/>
    <lineage>
        <taxon>Bacteria</taxon>
        <taxon>Pseudomonadati</taxon>
        <taxon>Campylobacterota</taxon>
        <taxon>Epsilonproteobacteria</taxon>
        <taxon>Campylobacterales</taxon>
        <taxon>Helicobacteraceae</taxon>
        <taxon>Helicobacter</taxon>
    </lineage>
</organism>
<evidence type="ECO:0000250" key="1">
    <source>
        <dbReference type="UniProtKB" id="O25396"/>
    </source>
</evidence>
<evidence type="ECO:0000250" key="2">
    <source>
        <dbReference type="UniProtKB" id="P33650"/>
    </source>
</evidence>
<evidence type="ECO:0000255" key="3"/>
<evidence type="ECO:0000255" key="4">
    <source>
        <dbReference type="PROSITE-ProRule" id="PRU01048"/>
    </source>
</evidence>
<evidence type="ECO:0000305" key="5"/>
<protein>
    <recommendedName>
        <fullName evidence="5">Fe(2+) transporter FeoB</fullName>
    </recommendedName>
    <alternativeName>
        <fullName>Ferrous iron transport protein B</fullName>
    </alternativeName>
</protein>
<proteinExistence type="inferred from homology"/>
<feature type="chain" id="PRO_0000210831" description="Fe(2+) transporter FeoB">
    <location>
        <begin position="1"/>
        <end position="642"/>
    </location>
</feature>
<feature type="transmembrane region" description="Helical" evidence="3">
    <location>
        <begin position="226"/>
        <end position="246"/>
    </location>
</feature>
<feature type="transmembrane region" description="Helical" evidence="3">
    <location>
        <begin position="279"/>
        <end position="299"/>
    </location>
</feature>
<feature type="transmembrane region" description="Helical" evidence="3">
    <location>
        <begin position="361"/>
        <end position="381"/>
    </location>
</feature>
<feature type="transmembrane region" description="Helical" evidence="3">
    <location>
        <begin position="388"/>
        <end position="408"/>
    </location>
</feature>
<feature type="transmembrane region" description="Helical" evidence="3">
    <location>
        <begin position="447"/>
        <end position="467"/>
    </location>
</feature>
<feature type="transmembrane region" description="Helical" evidence="3">
    <location>
        <begin position="541"/>
        <end position="561"/>
    </location>
</feature>
<feature type="transmembrane region" description="Helical" evidence="3">
    <location>
        <begin position="586"/>
        <end position="606"/>
    </location>
</feature>
<feature type="transmembrane region" description="Helical" evidence="3">
    <location>
        <begin position="615"/>
        <end position="635"/>
    </location>
</feature>
<feature type="domain" description="FeoB-type G" evidence="4">
    <location>
        <begin position="3"/>
        <end position="168"/>
    </location>
</feature>
<feature type="binding site" evidence="4">
    <location>
        <begin position="10"/>
        <end position="17"/>
    </location>
    <ligand>
        <name>GTP</name>
        <dbReference type="ChEBI" id="CHEBI:37565"/>
        <label>1</label>
    </ligand>
</feature>
<feature type="binding site" evidence="4">
    <location>
        <begin position="35"/>
        <end position="39"/>
    </location>
    <ligand>
        <name>GTP</name>
        <dbReference type="ChEBI" id="CHEBI:37565"/>
        <label>2</label>
    </ligand>
</feature>
<feature type="binding site" evidence="4">
    <location>
        <begin position="56"/>
        <end position="59"/>
    </location>
    <ligand>
        <name>GTP</name>
        <dbReference type="ChEBI" id="CHEBI:37565"/>
        <label>3</label>
    </ligand>
</feature>
<feature type="binding site" evidence="4">
    <location>
        <begin position="116"/>
        <end position="119"/>
    </location>
    <ligand>
        <name>GTP</name>
        <dbReference type="ChEBI" id="CHEBI:37565"/>
    </ligand>
</feature>
<feature type="binding site" evidence="4">
    <location>
        <begin position="145"/>
        <end position="147"/>
    </location>
    <ligand>
        <name>GTP</name>
        <dbReference type="ChEBI" id="CHEBI:37565"/>
    </ligand>
</feature>
<keyword id="KW-0067">ATP-binding</keyword>
<keyword id="KW-0997">Cell inner membrane</keyword>
<keyword id="KW-1003">Cell membrane</keyword>
<keyword id="KW-0342">GTP-binding</keyword>
<keyword id="KW-0406">Ion transport</keyword>
<keyword id="KW-0408">Iron</keyword>
<keyword id="KW-0410">Iron transport</keyword>
<keyword id="KW-0472">Membrane</keyword>
<keyword id="KW-0547">Nucleotide-binding</keyword>
<keyword id="KW-0812">Transmembrane</keyword>
<keyword id="KW-1133">Transmembrane helix</keyword>
<keyword id="KW-0813">Transport</keyword>
<accession>Q9ZLF3</accession>
<name>FEOB_HELPJ</name>
<dbReference type="EMBL" id="AE001439">
    <property type="protein sequence ID" value="AAD06199.1"/>
    <property type="molecule type" value="Genomic_DNA"/>
</dbReference>
<dbReference type="PIR" id="D71909">
    <property type="entry name" value="D71909"/>
</dbReference>
<dbReference type="RefSeq" id="WP_000658740.1">
    <property type="nucleotide sequence ID" value="NC_000921.1"/>
</dbReference>
<dbReference type="SMR" id="Q9ZLF3"/>
<dbReference type="KEGG" id="hpj:jhp_0627"/>
<dbReference type="PATRIC" id="fig|85963.30.peg.357"/>
<dbReference type="eggNOG" id="COG0370">
    <property type="taxonomic scope" value="Bacteria"/>
</dbReference>
<dbReference type="Proteomes" id="UP000000804">
    <property type="component" value="Chromosome"/>
</dbReference>
<dbReference type="GO" id="GO:0005886">
    <property type="term" value="C:plasma membrane"/>
    <property type="evidence" value="ECO:0007669"/>
    <property type="project" value="UniProtKB-SubCell"/>
</dbReference>
<dbReference type="GO" id="GO:0005524">
    <property type="term" value="F:ATP binding"/>
    <property type="evidence" value="ECO:0007669"/>
    <property type="project" value="UniProtKB-KW"/>
</dbReference>
<dbReference type="GO" id="GO:0015093">
    <property type="term" value="F:ferrous iron transmembrane transporter activity"/>
    <property type="evidence" value="ECO:0007669"/>
    <property type="project" value="InterPro"/>
</dbReference>
<dbReference type="GO" id="GO:0005525">
    <property type="term" value="F:GTP binding"/>
    <property type="evidence" value="ECO:0007669"/>
    <property type="project" value="UniProtKB-KW"/>
</dbReference>
<dbReference type="CDD" id="cd01879">
    <property type="entry name" value="FeoB"/>
    <property type="match status" value="1"/>
</dbReference>
<dbReference type="Gene3D" id="3.40.50.300">
    <property type="entry name" value="P-loop containing nucleotide triphosphate hydrolases"/>
    <property type="match status" value="1"/>
</dbReference>
<dbReference type="InterPro" id="IPR003373">
    <property type="entry name" value="Fe2_transport_prot-B"/>
</dbReference>
<dbReference type="InterPro" id="IPR011640">
    <property type="entry name" value="Fe2_transport_prot_B_C"/>
</dbReference>
<dbReference type="InterPro" id="IPR050860">
    <property type="entry name" value="FeoB_GTPase"/>
</dbReference>
<dbReference type="InterPro" id="IPR030389">
    <property type="entry name" value="G_FEOB_dom"/>
</dbReference>
<dbReference type="InterPro" id="IPR011642">
    <property type="entry name" value="Gate_dom"/>
</dbReference>
<dbReference type="InterPro" id="IPR027417">
    <property type="entry name" value="P-loop_NTPase"/>
</dbReference>
<dbReference type="NCBIfam" id="TIGR00437">
    <property type="entry name" value="feoB"/>
    <property type="match status" value="1"/>
</dbReference>
<dbReference type="PANTHER" id="PTHR43185:SF1">
    <property type="entry name" value="FE(2+) TRANSPORTER FEOB"/>
    <property type="match status" value="1"/>
</dbReference>
<dbReference type="PANTHER" id="PTHR43185">
    <property type="entry name" value="FERROUS IRON TRANSPORT PROTEIN B"/>
    <property type="match status" value="1"/>
</dbReference>
<dbReference type="Pfam" id="PF07664">
    <property type="entry name" value="FeoB_C"/>
    <property type="match status" value="1"/>
</dbReference>
<dbReference type="Pfam" id="PF02421">
    <property type="entry name" value="FeoB_N"/>
    <property type="match status" value="1"/>
</dbReference>
<dbReference type="Pfam" id="PF07670">
    <property type="entry name" value="Gate"/>
    <property type="match status" value="2"/>
</dbReference>
<dbReference type="SUPFAM" id="SSF52540">
    <property type="entry name" value="P-loop containing nucleoside triphosphate hydrolases"/>
    <property type="match status" value="1"/>
</dbReference>
<dbReference type="PROSITE" id="PS51711">
    <property type="entry name" value="G_FEOB"/>
    <property type="match status" value="1"/>
</dbReference>
<comment type="function">
    <text evidence="1">Probable transporter of an ATP-driven Fe(2+) uptake system.</text>
</comment>
<comment type="subcellular location">
    <subcellularLocation>
        <location evidence="2">Cell inner membrane</location>
        <topology evidence="2">Multi-pass membrane protein</topology>
    </subcellularLocation>
</comment>
<comment type="similarity">
    <text evidence="4">Belongs to the TRAFAC class TrmE-Era-EngA-EngB-Septin-like GTPase superfamily. FeoB GTPase (TC 9.A.8) family.</text>
</comment>